<sequence>MGAAYHFMGKAIPPHQLAIGTLGLLGLLVVPNPFKSAKPKTVDIKTDNKDEEKFIENYLKKHSEKQDA</sequence>
<dbReference type="EMBL" id="Z74820">
    <property type="status" value="NOT_ANNOTATED_CDS"/>
    <property type="molecule type" value="Genomic_DNA"/>
</dbReference>
<dbReference type="EMBL" id="AY692842">
    <property type="protein sequence ID" value="AAT92861.1"/>
    <property type="molecule type" value="Genomic_DNA"/>
</dbReference>
<dbReference type="EMBL" id="BK006948">
    <property type="protein sequence ID" value="DAA10706.1"/>
    <property type="molecule type" value="Genomic_DNA"/>
</dbReference>
<dbReference type="PIR" id="S78739">
    <property type="entry name" value="S78739"/>
</dbReference>
<dbReference type="RefSeq" id="NP_014564.1">
    <property type="nucleotide sequence ID" value="NM_001184377.1"/>
</dbReference>
<dbReference type="PDB" id="6B2Z">
    <property type="method" value="EM"/>
    <property type="resolution" value="3.60 A"/>
    <property type="chains" value="T/k=1-68"/>
</dbReference>
<dbReference type="PDB" id="6B8H">
    <property type="method" value="EM"/>
    <property type="resolution" value="3.60 A"/>
    <property type="chains" value="k/x=1-68"/>
</dbReference>
<dbReference type="PDBsum" id="6B2Z"/>
<dbReference type="PDBsum" id="6B8H"/>
<dbReference type="EMDB" id="EMD-7036"/>
<dbReference type="SMR" id="P81451"/>
<dbReference type="BioGRID" id="34324">
    <property type="interactions" value="36"/>
</dbReference>
<dbReference type="ComplexPortal" id="CPX-3281">
    <property type="entry name" value="Mitochondrial proton-transporting ATP synthase complex"/>
</dbReference>
<dbReference type="DIP" id="DIP-7393N"/>
<dbReference type="FunCoup" id="P81451">
    <property type="interactions" value="153"/>
</dbReference>
<dbReference type="IntAct" id="P81451">
    <property type="interactions" value="11"/>
</dbReference>
<dbReference type="STRING" id="4932.YOL077W-A"/>
<dbReference type="iPTMnet" id="P81451"/>
<dbReference type="PaxDb" id="4932-YOL077W-A"/>
<dbReference type="PeptideAtlas" id="P81451"/>
<dbReference type="TopDownProteomics" id="P81451"/>
<dbReference type="EnsemblFungi" id="YOL077W-A_mRNA">
    <property type="protein sequence ID" value="YOL077W-A"/>
    <property type="gene ID" value="YOL077W-A"/>
</dbReference>
<dbReference type="GeneID" id="854077"/>
<dbReference type="KEGG" id="sce:YOL077W-A"/>
<dbReference type="AGR" id="SGD:S000007339"/>
<dbReference type="SGD" id="S000007339">
    <property type="gene designation" value="ATP19"/>
</dbReference>
<dbReference type="VEuPathDB" id="FungiDB:YOL077W-A"/>
<dbReference type="eggNOG" id="ENOG502S99W">
    <property type="taxonomic scope" value="Eukaryota"/>
</dbReference>
<dbReference type="HOGENOM" id="CLU_172736_1_2_1"/>
<dbReference type="InParanoid" id="P81451"/>
<dbReference type="OMA" id="FQPHQLA"/>
<dbReference type="OrthoDB" id="2094445at2759"/>
<dbReference type="BioCyc" id="YEAST:G3O-33886-MONOMER"/>
<dbReference type="BioGRID-ORCS" id="854077">
    <property type="hits" value="9 hits in 10 CRISPR screens"/>
</dbReference>
<dbReference type="PRO" id="PR:P81451"/>
<dbReference type="Proteomes" id="UP000002311">
    <property type="component" value="Chromosome XV"/>
</dbReference>
<dbReference type="RNAct" id="P81451">
    <property type="molecule type" value="protein"/>
</dbReference>
<dbReference type="GO" id="GO:0005743">
    <property type="term" value="C:mitochondrial inner membrane"/>
    <property type="evidence" value="ECO:0000314"/>
    <property type="project" value="ComplexPortal"/>
</dbReference>
<dbReference type="GO" id="GO:0005739">
    <property type="term" value="C:mitochondrion"/>
    <property type="evidence" value="ECO:0000315"/>
    <property type="project" value="SGD"/>
</dbReference>
<dbReference type="GO" id="GO:0045259">
    <property type="term" value="C:proton-transporting ATP synthase complex"/>
    <property type="evidence" value="ECO:0000315"/>
    <property type="project" value="SGD"/>
</dbReference>
<dbReference type="GO" id="GO:0065003">
    <property type="term" value="P:protein-containing complex assembly"/>
    <property type="evidence" value="ECO:0000315"/>
    <property type="project" value="SGD"/>
</dbReference>
<dbReference type="GO" id="GO:0015986">
    <property type="term" value="P:proton motive force-driven ATP synthesis"/>
    <property type="evidence" value="ECO:0000314"/>
    <property type="project" value="ComplexPortal"/>
</dbReference>
<dbReference type="GO" id="GO:1902600">
    <property type="term" value="P:proton transmembrane transport"/>
    <property type="evidence" value="ECO:0007669"/>
    <property type="project" value="UniProtKB-KW"/>
</dbReference>
<dbReference type="InterPro" id="IPR021278">
    <property type="entry name" value="ATP19"/>
</dbReference>
<dbReference type="PANTHER" id="PTHR28074">
    <property type="entry name" value="ATP SYNTHASE SUBUNIT K, MITOCHONDRIAL"/>
    <property type="match status" value="1"/>
</dbReference>
<dbReference type="PANTHER" id="PTHR28074:SF1">
    <property type="entry name" value="ATP SYNTHASE SUBUNIT K, MITOCHONDRIAL"/>
    <property type="match status" value="1"/>
</dbReference>
<dbReference type="Pfam" id="PF11022">
    <property type="entry name" value="ATP19"/>
    <property type="match status" value="1"/>
</dbReference>
<protein>
    <recommendedName>
        <fullName>ATP synthase subunit K, mitochondrial</fullName>
    </recommendedName>
</protein>
<name>ATP19_YEAST</name>
<organism>
    <name type="scientific">Saccharomyces cerevisiae (strain ATCC 204508 / S288c)</name>
    <name type="common">Baker's yeast</name>
    <dbReference type="NCBI Taxonomy" id="559292"/>
    <lineage>
        <taxon>Eukaryota</taxon>
        <taxon>Fungi</taxon>
        <taxon>Dikarya</taxon>
        <taxon>Ascomycota</taxon>
        <taxon>Saccharomycotina</taxon>
        <taxon>Saccharomycetes</taxon>
        <taxon>Saccharomycetales</taxon>
        <taxon>Saccharomycetaceae</taxon>
        <taxon>Saccharomyces</taxon>
    </lineage>
</organism>
<gene>
    <name type="primary">ATP19</name>
    <name type="ordered locus">YOL077W-A</name>
    <name type="ORF">YOL078BW</name>
</gene>
<comment type="function">
    <text>Mitochondrial membrane ATP synthase (F(1)F(0) ATP synthase or Complex V) produces ATP from ADP in the presence of a proton gradient across the membrane which is generated by electron transport complexes of the respiratory chain. F-type ATPases consist of two structural domains, F(1) - containing the extramembraneous catalytic core and F(0) - containing the membrane proton channel, linked together by a central stalk and a peripheral stalk. During catalysis, ATP synthesis in the catalytic domain of F(1) is coupled via a rotary mechanism of the central stalk subunits to proton translocation. Part of the complex F(0) domain. Minor subunit located with subunit a in the membrane. The K chain binds the dimeric form by interacting with the G and E chains.</text>
</comment>
<comment type="subunit">
    <text>F-type ATPases have 2 components, CF(1) - the catalytic core - and CF(0) - the membrane proton channel. In yeast, the dimeric form of ATP synthase consists of 17 polypeptides: alpha, beta, gamma, delta, epsilon, 4 (B), 5 (OSCP), 6 (A), 8, 9 (C), d, E (Tim11), f, g, h, i/j and k.</text>
</comment>
<comment type="subcellular location">
    <subcellularLocation>
        <location>Mitochondrion inner membrane</location>
        <topology>Single-pass membrane protein</topology>
    </subcellularLocation>
</comment>
<comment type="miscellaneous">
    <text evidence="2">Present with 1320 molecules/cell in log phase SD medium.</text>
</comment>
<comment type="similarity">
    <text evidence="3">Belongs to the ATP19 family.</text>
</comment>
<feature type="chain" id="PRO_0000071699" description="ATP synthase subunit K, mitochondrial">
    <location>
        <begin position="1"/>
        <end position="68"/>
    </location>
</feature>
<feature type="transmembrane region" description="Helical" evidence="1">
    <location>
        <begin position="15"/>
        <end position="31"/>
    </location>
</feature>
<proteinExistence type="evidence at protein level"/>
<reference key="1">
    <citation type="journal article" date="1997" name="Yeast">
        <title>Sequence analysis of a 33.2 kb segment from the left arm of yeast chromosome XV reveals eight known genes and ten new open reading frames including homologues of ABC transporters, inositol phosphatases and human expressed sequence tags.</title>
        <authorList>
            <person name="Tzermia M."/>
            <person name="Katsoulou C."/>
            <person name="Alexandraki D."/>
        </authorList>
    </citation>
    <scope>NUCLEOTIDE SEQUENCE [GENOMIC DNA]</scope>
</reference>
<reference key="2">
    <citation type="journal article" date="1997" name="Nature">
        <title>The nucleotide sequence of Saccharomyces cerevisiae chromosome XV.</title>
        <authorList>
            <person name="Dujon B."/>
            <person name="Albermann K."/>
            <person name="Aldea M."/>
            <person name="Alexandraki D."/>
            <person name="Ansorge W."/>
            <person name="Arino J."/>
            <person name="Benes V."/>
            <person name="Bohn C."/>
            <person name="Bolotin-Fukuhara M."/>
            <person name="Bordonne R."/>
            <person name="Boyer J."/>
            <person name="Camasses A."/>
            <person name="Casamayor A."/>
            <person name="Casas C."/>
            <person name="Cheret G."/>
            <person name="Cziepluch C."/>
            <person name="Daignan-Fornier B."/>
            <person name="Dang V.-D."/>
            <person name="de Haan M."/>
            <person name="Delius H."/>
            <person name="Durand P."/>
            <person name="Fairhead C."/>
            <person name="Feldmann H."/>
            <person name="Gaillon L."/>
            <person name="Galisson F."/>
            <person name="Gamo F.-J."/>
            <person name="Gancedo C."/>
            <person name="Goffeau A."/>
            <person name="Goulding S.E."/>
            <person name="Grivell L.A."/>
            <person name="Habbig B."/>
            <person name="Hand N.J."/>
            <person name="Hani J."/>
            <person name="Hattenhorst U."/>
            <person name="Hebling U."/>
            <person name="Hernando Y."/>
            <person name="Herrero E."/>
            <person name="Heumann K."/>
            <person name="Hiesel R."/>
            <person name="Hilger F."/>
            <person name="Hofmann B."/>
            <person name="Hollenberg C.P."/>
            <person name="Hughes B."/>
            <person name="Jauniaux J.-C."/>
            <person name="Kalogeropoulos A."/>
            <person name="Katsoulou C."/>
            <person name="Kordes E."/>
            <person name="Lafuente M.J."/>
            <person name="Landt O."/>
            <person name="Louis E.J."/>
            <person name="Maarse A.C."/>
            <person name="Madania A."/>
            <person name="Mannhaupt G."/>
            <person name="Marck C."/>
            <person name="Martin R.P."/>
            <person name="Mewes H.-W."/>
            <person name="Michaux G."/>
            <person name="Paces V."/>
            <person name="Parle-McDermott A.G."/>
            <person name="Pearson B.M."/>
            <person name="Perrin A."/>
            <person name="Pettersson B."/>
            <person name="Poch O."/>
            <person name="Pohl T.M."/>
            <person name="Poirey R."/>
            <person name="Portetelle D."/>
            <person name="Pujol A."/>
            <person name="Purnelle B."/>
            <person name="Ramezani Rad M."/>
            <person name="Rechmann S."/>
            <person name="Schwager C."/>
            <person name="Schweizer M."/>
            <person name="Sor F."/>
            <person name="Sterky F."/>
            <person name="Tarassov I.A."/>
            <person name="Teodoru C."/>
            <person name="Tettelin H."/>
            <person name="Thierry A."/>
            <person name="Tobiasch E."/>
            <person name="Tzermia M."/>
            <person name="Uhlen M."/>
            <person name="Unseld M."/>
            <person name="Valens M."/>
            <person name="Vandenbol M."/>
            <person name="Vetter I."/>
            <person name="Vlcek C."/>
            <person name="Voet M."/>
            <person name="Volckaert G."/>
            <person name="Voss H."/>
            <person name="Wambutt R."/>
            <person name="Wedler H."/>
            <person name="Wiemann S."/>
            <person name="Winsor B."/>
            <person name="Wolfe K.H."/>
            <person name="Zollner A."/>
            <person name="Zumstein E."/>
            <person name="Kleine K."/>
        </authorList>
    </citation>
    <scope>NUCLEOTIDE SEQUENCE [LARGE SCALE GENOMIC DNA]</scope>
    <source>
        <strain>ATCC 204508 / S288c</strain>
    </source>
</reference>
<reference key="3">
    <citation type="journal article" date="2014" name="G3 (Bethesda)">
        <title>The reference genome sequence of Saccharomyces cerevisiae: Then and now.</title>
        <authorList>
            <person name="Engel S.R."/>
            <person name="Dietrich F.S."/>
            <person name="Fisk D.G."/>
            <person name="Binkley G."/>
            <person name="Balakrishnan R."/>
            <person name="Costanzo M.C."/>
            <person name="Dwight S.S."/>
            <person name="Hitz B.C."/>
            <person name="Karra K."/>
            <person name="Nash R.S."/>
            <person name="Weng S."/>
            <person name="Wong E.D."/>
            <person name="Lloyd P."/>
            <person name="Skrzypek M.S."/>
            <person name="Miyasato S.R."/>
            <person name="Simison M."/>
            <person name="Cherry J.M."/>
        </authorList>
    </citation>
    <scope>GENOME REANNOTATION</scope>
    <source>
        <strain>ATCC 204508 / S288c</strain>
    </source>
</reference>
<reference key="4">
    <citation type="journal article" date="2007" name="Genome Res.">
        <title>Approaching a complete repository of sequence-verified protein-encoding clones for Saccharomyces cerevisiae.</title>
        <authorList>
            <person name="Hu Y."/>
            <person name="Rolfs A."/>
            <person name="Bhullar B."/>
            <person name="Murthy T.V.S."/>
            <person name="Zhu C."/>
            <person name="Berger M.F."/>
            <person name="Camargo A.A."/>
            <person name="Kelley F."/>
            <person name="McCarron S."/>
            <person name="Jepson D."/>
            <person name="Richardson A."/>
            <person name="Raphael J."/>
            <person name="Moreira D."/>
            <person name="Taycher E."/>
            <person name="Zuo D."/>
            <person name="Mohr S."/>
            <person name="Kane M.F."/>
            <person name="Williamson J."/>
            <person name="Simpson A.J.G."/>
            <person name="Bulyk M.L."/>
            <person name="Harlow E."/>
            <person name="Marsischky G."/>
            <person name="Kolodner R.D."/>
            <person name="LaBaer J."/>
        </authorList>
    </citation>
    <scope>NUCLEOTIDE SEQUENCE [GENOMIC DNA]</scope>
    <source>
        <strain>ATCC 204508 / S288c</strain>
    </source>
</reference>
<reference key="5">
    <citation type="journal article" date="1998" name="EMBO J.">
        <title>Yeast mitochondrial F1F0-ATPase exists as a dimer: identification of three dimer-specific subunits.</title>
        <authorList>
            <person name="Arnold I."/>
            <person name="Pfeiffer K."/>
            <person name="Neupert W."/>
            <person name="Stuart R.A."/>
            <person name="Schaegger H."/>
        </authorList>
    </citation>
    <scope>IDENTIFICATION</scope>
    <scope>PROTEIN SEQUENCE OF 1-14</scope>
    <source>
        <strain>ATCC 208353 / W303-1A</strain>
    </source>
</reference>
<reference key="6">
    <citation type="journal article" date="2003" name="Nature">
        <title>Global analysis of protein expression in yeast.</title>
        <authorList>
            <person name="Ghaemmaghami S."/>
            <person name="Huh W.-K."/>
            <person name="Bower K."/>
            <person name="Howson R.W."/>
            <person name="Belle A."/>
            <person name="Dephoure N."/>
            <person name="O'Shea E.K."/>
            <person name="Weissman J.S."/>
        </authorList>
    </citation>
    <scope>LEVEL OF PROTEIN EXPRESSION [LARGE SCALE ANALYSIS]</scope>
</reference>
<evidence type="ECO:0000255" key="1"/>
<evidence type="ECO:0000269" key="2">
    <source>
    </source>
</evidence>
<evidence type="ECO:0000305" key="3"/>
<accession>P81451</accession>
<accession>D6W1Z0</accession>
<keyword id="KW-0002">3D-structure</keyword>
<keyword id="KW-0066">ATP synthesis</keyword>
<keyword id="KW-0138">CF(0)</keyword>
<keyword id="KW-0903">Direct protein sequencing</keyword>
<keyword id="KW-0375">Hydrogen ion transport</keyword>
<keyword id="KW-0406">Ion transport</keyword>
<keyword id="KW-0472">Membrane</keyword>
<keyword id="KW-0496">Mitochondrion</keyword>
<keyword id="KW-0999">Mitochondrion inner membrane</keyword>
<keyword id="KW-1185">Reference proteome</keyword>
<keyword id="KW-0812">Transmembrane</keyword>
<keyword id="KW-1133">Transmembrane helix</keyword>
<keyword id="KW-0813">Transport</keyword>